<name>ACOX1_DICDI</name>
<feature type="chain" id="PRO_0000330929" description="Peroxisomal acyl-coenzyme A oxidase 1">
    <location>
        <begin position="1"/>
        <end position="700"/>
    </location>
</feature>
<feature type="short sequence motif" description="Microbody targeting signal" evidence="4">
    <location>
        <begin position="698"/>
        <end position="700"/>
    </location>
</feature>
<feature type="active site" description="Proton acceptor" evidence="2">
    <location>
        <position position="437"/>
    </location>
</feature>
<feature type="binding site" evidence="2">
    <location>
        <position position="147"/>
    </location>
    <ligand>
        <name>FAD</name>
        <dbReference type="ChEBI" id="CHEBI:57692"/>
    </ligand>
</feature>
<feature type="binding site" evidence="2">
    <location>
        <position position="186"/>
    </location>
    <ligand>
        <name>FAD</name>
        <dbReference type="ChEBI" id="CHEBI:57692"/>
    </ligand>
</feature>
<feature type="binding site" evidence="1">
    <location>
        <begin position="412"/>
        <end position="417"/>
    </location>
    <ligand>
        <name>FAD</name>
        <dbReference type="ChEBI" id="CHEBI:57692"/>
    </ligand>
</feature>
<sequence length="700" mass="79762">MYCPKAYENEKKNEDLEFERSQSTFSVSELNFILNNNDHNIINIKNEIKKFIDNDEIISKPQEIHFLSREEQYKRALYVSSKLIEIKKRFGEIGRDQYYQSLFEEIPFVINDIVFACAFKSLASDEQMNRLYSKFENYQYFGSYSQTEIGHGSNVQGIETTCTFIKETGEFELNSPNLTSTKFWIGGLGKLATHTIVFAQLLIPSSIDGKLKNYGPHPFILQVRSLDDHSPLPGVTVGDIGPKLGFNSIDNGFLRLDHVRIPRENMLSRFFRVNEQGEYEKPKHPKLIYAGMVGVRSSMIENSFVSLSRAVTIAIRYSTIRKQFKSNRLDKQEKKIIEYSNQMNRIIPYLAQTFAYFFTGKRFSIEFDQMMKAVKHNQDTTLLSELHANSSGLKSLMTQSTSDGIESCRLSCGGHGYSQFSGLPYLWSNYVHMSSAEGESNLLPQQTTKYLLTILRKVLSGGGGSSDTTTADDDNKPIGKSVKYINDEFQSSFENINQFIQEKGLNSIIHPDSLLQLFKHRSFILIKSIAESIQEQMSNGNKDIPQIWSDLNVEINHCSKAHCQLYVIQSFYDQILLLSSNSSSCSSSITTVLIQLLQTYSIWIINSNLVDFLQDQYVELSQIDFLKKSLINFYKLLRPNLVPLVDSFDLCNTTLGSALGSYNGDVYSTLYKWASTQPFNKNSLPLGFNETIKPLINSKL</sequence>
<keyword id="KW-0274">FAD</keyword>
<keyword id="KW-0276">Fatty acid metabolism</keyword>
<keyword id="KW-0285">Flavoprotein</keyword>
<keyword id="KW-0443">Lipid metabolism</keyword>
<keyword id="KW-0560">Oxidoreductase</keyword>
<keyword id="KW-0576">Peroxisome</keyword>
<keyword id="KW-1185">Reference proteome</keyword>
<accession>Q54GQ6</accession>
<protein>
    <recommendedName>
        <fullName>Peroxisomal acyl-coenzyme A oxidase 1</fullName>
        <ecNumber>1.3.3.6</ecNumber>
    </recommendedName>
</protein>
<gene>
    <name type="primary">acox1</name>
    <name type="ORF">DDB_G0289993</name>
</gene>
<reference key="1">
    <citation type="journal article" date="2005" name="Nature">
        <title>The genome of the social amoeba Dictyostelium discoideum.</title>
        <authorList>
            <person name="Eichinger L."/>
            <person name="Pachebat J.A."/>
            <person name="Gloeckner G."/>
            <person name="Rajandream M.A."/>
            <person name="Sucgang R."/>
            <person name="Berriman M."/>
            <person name="Song J."/>
            <person name="Olsen R."/>
            <person name="Szafranski K."/>
            <person name="Xu Q."/>
            <person name="Tunggal B."/>
            <person name="Kummerfeld S."/>
            <person name="Madera M."/>
            <person name="Konfortov B.A."/>
            <person name="Rivero F."/>
            <person name="Bankier A.T."/>
            <person name="Lehmann R."/>
            <person name="Hamlin N."/>
            <person name="Davies R."/>
            <person name="Gaudet P."/>
            <person name="Fey P."/>
            <person name="Pilcher K."/>
            <person name="Chen G."/>
            <person name="Saunders D."/>
            <person name="Sodergren E.J."/>
            <person name="Davis P."/>
            <person name="Kerhornou A."/>
            <person name="Nie X."/>
            <person name="Hall N."/>
            <person name="Anjard C."/>
            <person name="Hemphill L."/>
            <person name="Bason N."/>
            <person name="Farbrother P."/>
            <person name="Desany B."/>
            <person name="Just E."/>
            <person name="Morio T."/>
            <person name="Rost R."/>
            <person name="Churcher C.M."/>
            <person name="Cooper J."/>
            <person name="Haydock S."/>
            <person name="van Driessche N."/>
            <person name="Cronin A."/>
            <person name="Goodhead I."/>
            <person name="Muzny D.M."/>
            <person name="Mourier T."/>
            <person name="Pain A."/>
            <person name="Lu M."/>
            <person name="Harper D."/>
            <person name="Lindsay R."/>
            <person name="Hauser H."/>
            <person name="James K.D."/>
            <person name="Quiles M."/>
            <person name="Madan Babu M."/>
            <person name="Saito T."/>
            <person name="Buchrieser C."/>
            <person name="Wardroper A."/>
            <person name="Felder M."/>
            <person name="Thangavelu M."/>
            <person name="Johnson D."/>
            <person name="Knights A."/>
            <person name="Loulseged H."/>
            <person name="Mungall K.L."/>
            <person name="Oliver K."/>
            <person name="Price C."/>
            <person name="Quail M.A."/>
            <person name="Urushihara H."/>
            <person name="Hernandez J."/>
            <person name="Rabbinowitsch E."/>
            <person name="Steffen D."/>
            <person name="Sanders M."/>
            <person name="Ma J."/>
            <person name="Kohara Y."/>
            <person name="Sharp S."/>
            <person name="Simmonds M.N."/>
            <person name="Spiegler S."/>
            <person name="Tivey A."/>
            <person name="Sugano S."/>
            <person name="White B."/>
            <person name="Walker D."/>
            <person name="Woodward J.R."/>
            <person name="Winckler T."/>
            <person name="Tanaka Y."/>
            <person name="Shaulsky G."/>
            <person name="Schleicher M."/>
            <person name="Weinstock G.M."/>
            <person name="Rosenthal A."/>
            <person name="Cox E.C."/>
            <person name="Chisholm R.L."/>
            <person name="Gibbs R.A."/>
            <person name="Loomis W.F."/>
            <person name="Platzer M."/>
            <person name="Kay R.R."/>
            <person name="Williams J.G."/>
            <person name="Dear P.H."/>
            <person name="Noegel A.A."/>
            <person name="Barrell B.G."/>
            <person name="Kuspa A."/>
        </authorList>
    </citation>
    <scope>NUCLEOTIDE SEQUENCE [LARGE SCALE GENOMIC DNA]</scope>
    <source>
        <strain>AX4</strain>
    </source>
</reference>
<evidence type="ECO:0000250" key="1"/>
<evidence type="ECO:0000250" key="2">
    <source>
        <dbReference type="UniProtKB" id="P07872"/>
    </source>
</evidence>
<evidence type="ECO:0000250" key="3">
    <source>
        <dbReference type="UniProtKB" id="Q15067"/>
    </source>
</evidence>
<evidence type="ECO:0000255" key="4"/>
<evidence type="ECO:0000305" key="5"/>
<organism>
    <name type="scientific">Dictyostelium discoideum</name>
    <name type="common">Social amoeba</name>
    <dbReference type="NCBI Taxonomy" id="44689"/>
    <lineage>
        <taxon>Eukaryota</taxon>
        <taxon>Amoebozoa</taxon>
        <taxon>Evosea</taxon>
        <taxon>Eumycetozoa</taxon>
        <taxon>Dictyostelia</taxon>
        <taxon>Dictyosteliales</taxon>
        <taxon>Dictyosteliaceae</taxon>
        <taxon>Dictyostelium</taxon>
    </lineage>
</organism>
<dbReference type="EC" id="1.3.3.6"/>
<dbReference type="EMBL" id="AAFI02000150">
    <property type="protein sequence ID" value="EAL62442.1"/>
    <property type="molecule type" value="Genomic_DNA"/>
</dbReference>
<dbReference type="RefSeq" id="XP_635946.1">
    <property type="nucleotide sequence ID" value="XM_630854.1"/>
</dbReference>
<dbReference type="SMR" id="Q54GQ6"/>
<dbReference type="FunCoup" id="Q54GQ6">
    <property type="interactions" value="312"/>
</dbReference>
<dbReference type="STRING" id="44689.Q54GQ6"/>
<dbReference type="PaxDb" id="44689-DDB0234154"/>
<dbReference type="EnsemblProtists" id="EAL62442">
    <property type="protein sequence ID" value="EAL62442"/>
    <property type="gene ID" value="DDB_G0289993"/>
</dbReference>
<dbReference type="GeneID" id="8627428"/>
<dbReference type="KEGG" id="ddi:DDB_G0289993"/>
<dbReference type="dictyBase" id="DDB_G0289993"/>
<dbReference type="VEuPathDB" id="AmoebaDB:DDB_G0289993"/>
<dbReference type="eggNOG" id="KOG0136">
    <property type="taxonomic scope" value="Eukaryota"/>
</dbReference>
<dbReference type="HOGENOM" id="CLU_014629_3_1_1"/>
<dbReference type="InParanoid" id="Q54GQ6"/>
<dbReference type="OMA" id="NHGVHCF"/>
<dbReference type="PhylomeDB" id="Q54GQ6"/>
<dbReference type="Reactome" id="R-DDI-193368">
    <property type="pathway name" value="Synthesis of bile acids and bile salts via 7alpha-hydroxycholesterol"/>
</dbReference>
<dbReference type="Reactome" id="R-DDI-2046106">
    <property type="pathway name" value="alpha-linolenic acid (ALA) metabolism"/>
</dbReference>
<dbReference type="Reactome" id="R-DDI-389887">
    <property type="pathway name" value="Beta-oxidation of pristanoyl-CoA"/>
</dbReference>
<dbReference type="Reactome" id="R-DDI-390247">
    <property type="pathway name" value="Beta-oxidation of very long chain fatty acids"/>
</dbReference>
<dbReference type="Reactome" id="R-DDI-9033241">
    <property type="pathway name" value="Peroxisomal protein import"/>
</dbReference>
<dbReference type="PRO" id="PR:Q54GQ6"/>
<dbReference type="Proteomes" id="UP000002195">
    <property type="component" value="Chromosome 5"/>
</dbReference>
<dbReference type="GO" id="GO:0005777">
    <property type="term" value="C:peroxisome"/>
    <property type="evidence" value="ECO:0000250"/>
    <property type="project" value="UniProtKB"/>
</dbReference>
<dbReference type="GO" id="GO:0003997">
    <property type="term" value="F:acyl-CoA oxidase activity"/>
    <property type="evidence" value="ECO:0000250"/>
    <property type="project" value="UniProtKB"/>
</dbReference>
<dbReference type="GO" id="GO:0071949">
    <property type="term" value="F:FAD binding"/>
    <property type="evidence" value="ECO:0007669"/>
    <property type="project" value="InterPro"/>
</dbReference>
<dbReference type="GO" id="GO:0005504">
    <property type="term" value="F:fatty acid binding"/>
    <property type="evidence" value="ECO:0000318"/>
    <property type="project" value="GO_Central"/>
</dbReference>
<dbReference type="GO" id="GO:0050660">
    <property type="term" value="F:flavin adenine dinucleotide binding"/>
    <property type="evidence" value="ECO:0000318"/>
    <property type="project" value="GO_Central"/>
</dbReference>
<dbReference type="GO" id="GO:0042803">
    <property type="term" value="F:protein homodimerization activity"/>
    <property type="evidence" value="ECO:0000250"/>
    <property type="project" value="UniProtKB"/>
</dbReference>
<dbReference type="GO" id="GO:0033540">
    <property type="term" value="P:fatty acid beta-oxidation using acyl-CoA oxidase"/>
    <property type="evidence" value="ECO:0000318"/>
    <property type="project" value="GO_Central"/>
</dbReference>
<dbReference type="GO" id="GO:0009062">
    <property type="term" value="P:fatty acid catabolic process"/>
    <property type="evidence" value="ECO:0000250"/>
    <property type="project" value="UniProtKB"/>
</dbReference>
<dbReference type="GO" id="GO:0019395">
    <property type="term" value="P:fatty acid oxidation"/>
    <property type="evidence" value="ECO:0000250"/>
    <property type="project" value="UniProtKB"/>
</dbReference>
<dbReference type="GO" id="GO:0006091">
    <property type="term" value="P:generation of precursor metabolites and energy"/>
    <property type="evidence" value="ECO:0000250"/>
    <property type="project" value="UniProtKB"/>
</dbReference>
<dbReference type="GO" id="GO:0050665">
    <property type="term" value="P:hydrogen peroxide biosynthetic process"/>
    <property type="evidence" value="ECO:0000250"/>
    <property type="project" value="UniProtKB"/>
</dbReference>
<dbReference type="GO" id="GO:0006629">
    <property type="term" value="P:lipid metabolic process"/>
    <property type="evidence" value="ECO:0000250"/>
    <property type="project" value="UniProtKB"/>
</dbReference>
<dbReference type="GO" id="GO:0006693">
    <property type="term" value="P:prostaglandin metabolic process"/>
    <property type="evidence" value="ECO:0000250"/>
    <property type="project" value="UniProtKB"/>
</dbReference>
<dbReference type="GO" id="GO:0140493">
    <property type="term" value="P:very long-chain fatty acid beta-oxidation"/>
    <property type="evidence" value="ECO:0000250"/>
    <property type="project" value="UniProtKB"/>
</dbReference>
<dbReference type="FunFam" id="1.20.140.10:FF:000013">
    <property type="entry name" value="Acyl-coenzyme A oxidase"/>
    <property type="match status" value="1"/>
</dbReference>
<dbReference type="FunFam" id="1.20.140.10:FF:000015">
    <property type="entry name" value="Acyl-coenzyme A oxidase"/>
    <property type="match status" value="1"/>
</dbReference>
<dbReference type="FunFam" id="2.40.110.10:FF:000003">
    <property type="entry name" value="Acyl-coenzyme A oxidase"/>
    <property type="match status" value="1"/>
</dbReference>
<dbReference type="Gene3D" id="1.10.540.10">
    <property type="entry name" value="Acyl-CoA dehydrogenase/oxidase, N-terminal domain"/>
    <property type="match status" value="1"/>
</dbReference>
<dbReference type="Gene3D" id="2.40.110.10">
    <property type="entry name" value="Butyryl-CoA Dehydrogenase, subunit A, domain 2"/>
    <property type="match status" value="1"/>
</dbReference>
<dbReference type="Gene3D" id="1.20.140.10">
    <property type="entry name" value="Butyryl-CoA Dehydrogenase, subunit A, domain 3"/>
    <property type="match status" value="2"/>
</dbReference>
<dbReference type="InterPro" id="IPR055060">
    <property type="entry name" value="ACOX_C_alpha1"/>
</dbReference>
<dbReference type="InterPro" id="IPR029320">
    <property type="entry name" value="Acyl-CoA_ox_N"/>
</dbReference>
<dbReference type="InterPro" id="IPR046373">
    <property type="entry name" value="Acyl-CoA_Oxase/DH_mid-dom_sf"/>
</dbReference>
<dbReference type="InterPro" id="IPR012258">
    <property type="entry name" value="Acyl-CoA_oxidase"/>
</dbReference>
<dbReference type="InterPro" id="IPR002655">
    <property type="entry name" value="Acyl-CoA_oxidase_C"/>
</dbReference>
<dbReference type="InterPro" id="IPR036250">
    <property type="entry name" value="AcylCo_DH-like_C"/>
</dbReference>
<dbReference type="InterPro" id="IPR037069">
    <property type="entry name" value="AcylCoA_DH/ox_N_sf"/>
</dbReference>
<dbReference type="InterPro" id="IPR009100">
    <property type="entry name" value="AcylCoA_DH/oxidase_NM_dom_sf"/>
</dbReference>
<dbReference type="PANTHER" id="PTHR10909">
    <property type="entry name" value="ELECTRON TRANSPORT OXIDOREDUCTASE"/>
    <property type="match status" value="1"/>
</dbReference>
<dbReference type="PANTHER" id="PTHR10909:SF250">
    <property type="entry name" value="PEROXISOMAL ACYL-COENZYME A OXIDASE 1"/>
    <property type="match status" value="1"/>
</dbReference>
<dbReference type="Pfam" id="PF01756">
    <property type="entry name" value="ACOX"/>
    <property type="match status" value="1"/>
</dbReference>
<dbReference type="Pfam" id="PF22924">
    <property type="entry name" value="ACOX_C_alpha1"/>
    <property type="match status" value="1"/>
</dbReference>
<dbReference type="Pfam" id="PF14749">
    <property type="entry name" value="Acyl-CoA_ox_N"/>
    <property type="match status" value="1"/>
</dbReference>
<dbReference type="PIRSF" id="PIRSF000168">
    <property type="entry name" value="Acyl-CoA_oxidase"/>
    <property type="match status" value="1"/>
</dbReference>
<dbReference type="SUPFAM" id="SSF47203">
    <property type="entry name" value="Acyl-CoA dehydrogenase C-terminal domain-like"/>
    <property type="match status" value="2"/>
</dbReference>
<dbReference type="SUPFAM" id="SSF56645">
    <property type="entry name" value="Acyl-CoA dehydrogenase NM domain-like"/>
    <property type="match status" value="1"/>
</dbReference>
<proteinExistence type="inferred from homology"/>
<comment type="function">
    <text evidence="3">Catalyzes the desaturation of acyl-CoAs to 2-trans-enoyl-CoAs. First enzyme of the fatty acid beta-oxidation pathway.</text>
</comment>
<comment type="catalytic activity">
    <reaction>
        <text>a 2,3-saturated acyl-CoA + O2 = a (2E)-enoyl-CoA + H2O2</text>
        <dbReference type="Rhea" id="RHEA:38959"/>
        <dbReference type="ChEBI" id="CHEBI:15379"/>
        <dbReference type="ChEBI" id="CHEBI:16240"/>
        <dbReference type="ChEBI" id="CHEBI:58856"/>
        <dbReference type="ChEBI" id="CHEBI:65111"/>
        <dbReference type="EC" id="1.3.3.6"/>
    </reaction>
</comment>
<comment type="cofactor">
    <cofactor evidence="1">
        <name>FAD</name>
        <dbReference type="ChEBI" id="CHEBI:57692"/>
    </cofactor>
</comment>
<comment type="subcellular location">
    <subcellularLocation>
        <location evidence="1">Peroxisome</location>
    </subcellularLocation>
</comment>
<comment type="similarity">
    <text evidence="5">Belongs to the acyl-CoA oxidase family.</text>
</comment>